<accession>B5VPS9</accession>
<proteinExistence type="inferred from homology"/>
<gene>
    <name type="primary">AIM36</name>
    <name type="synonym">FMP39</name>
    <name type="ORF">AWRI1631_132960</name>
</gene>
<keyword id="KW-0472">Membrane</keyword>
<keyword id="KW-0496">Mitochondrion</keyword>
<keyword id="KW-0809">Transit peptide</keyword>
<keyword id="KW-0812">Transmembrane</keyword>
<keyword id="KW-1133">Transmembrane helix</keyword>
<dbReference type="EMBL" id="ABSV01001848">
    <property type="protein sequence ID" value="EDZ70065.1"/>
    <property type="molecule type" value="Genomic_DNA"/>
</dbReference>
<dbReference type="SMR" id="B5VPS9"/>
<dbReference type="Proteomes" id="UP000008988">
    <property type="component" value="Unassembled WGS sequence"/>
</dbReference>
<dbReference type="GO" id="GO:0031966">
    <property type="term" value="C:mitochondrial membrane"/>
    <property type="evidence" value="ECO:0007669"/>
    <property type="project" value="UniProtKB-SubCell"/>
</dbReference>
<evidence type="ECO:0000250" key="1"/>
<evidence type="ECO:0000255" key="2"/>
<evidence type="ECO:0000305" key="3"/>
<reference key="1">
    <citation type="journal article" date="2008" name="FEMS Yeast Res.">
        <title>Comparative genome analysis of a Saccharomyces cerevisiae wine strain.</title>
        <authorList>
            <person name="Borneman A.R."/>
            <person name="Forgan A.H."/>
            <person name="Pretorius I.S."/>
            <person name="Chambers P.J."/>
        </authorList>
    </citation>
    <scope>NUCLEOTIDE SEQUENCE [LARGE SCALE GENOMIC DNA]</scope>
    <source>
        <strain>AWRI1631</strain>
    </source>
</reference>
<protein>
    <recommendedName>
        <fullName>Altered inheritance of mitochondria protein 36, mitochondrial</fullName>
    </recommendedName>
    <alternativeName>
        <fullName>Found in mitochondria protein 39</fullName>
    </alternativeName>
</protein>
<organism>
    <name type="scientific">Saccharomyces cerevisiae (strain AWRI1631)</name>
    <name type="common">Baker's yeast</name>
    <dbReference type="NCBI Taxonomy" id="545124"/>
    <lineage>
        <taxon>Eukaryota</taxon>
        <taxon>Fungi</taxon>
        <taxon>Dikarya</taxon>
        <taxon>Ascomycota</taxon>
        <taxon>Saccharomycotina</taxon>
        <taxon>Saccharomycetes</taxon>
        <taxon>Saccharomycetales</taxon>
        <taxon>Saccharomycetaceae</taxon>
        <taxon>Saccharomyces</taxon>
    </lineage>
</organism>
<comment type="subcellular location">
    <subcellularLocation>
        <location evidence="1">Mitochondrion membrane</location>
        <topology evidence="1">Single-pass membrane protein</topology>
    </subcellularLocation>
</comment>
<comment type="similarity">
    <text evidence="3">Belongs to the AIM36 family.</text>
</comment>
<name>AIM36_YEAS6</name>
<feature type="transit peptide" description="Mitochondrion" evidence="2">
    <location>
        <begin position="1"/>
        <end position="40"/>
    </location>
</feature>
<feature type="chain" id="PRO_0000399733" description="Altered inheritance of mitochondria protein 36, mitochondrial">
    <location>
        <begin position="41"/>
        <end position="255"/>
    </location>
</feature>
<feature type="transmembrane region" description="Helical" evidence="2">
    <location>
        <begin position="64"/>
        <end position="82"/>
    </location>
</feature>
<sequence length="255" mass="29047">MLRPLRKSVLASCRHCFKVCGGLPQKQLPLFSPLLLRARYSSTDSSTKRSNKSDKIDAPGFKKIFLVAIIGTVIFVKTVQSLDKNKPKTTLSEEEFENVVKGLKRRVAIFPQGEVDIKFSLSPSIEETRKVLQKSQGDDINELQFVDPVKVIDYYRTLRDDRYEALLNEYYKKYGCDTYAYNLPTGMLVMLLGRYFKENFKAGDKLVVVNFPHSIADATRFENEVSIVSKIFVPRKLSGSDVCKYYETVGKADII</sequence>